<gene>
    <name type="primary">AHP1</name>
    <name type="synonym">ATHP3</name>
    <name type="ordered locus">At3g21510</name>
    <name type="ORF">MIL23.8</name>
</gene>
<evidence type="ECO:0000250" key="1">
    <source>
        <dbReference type="UniProtKB" id="Q9ZNV8"/>
    </source>
</evidence>
<evidence type="ECO:0000255" key="2">
    <source>
        <dbReference type="PROSITE-ProRule" id="PRU00110"/>
    </source>
</evidence>
<evidence type="ECO:0000269" key="3">
    <source>
    </source>
</evidence>
<evidence type="ECO:0000269" key="4">
    <source>
    </source>
</evidence>
<evidence type="ECO:0000269" key="5">
    <source>
    </source>
</evidence>
<evidence type="ECO:0000269" key="6">
    <source>
    </source>
</evidence>
<evidence type="ECO:0000269" key="7">
    <source>
    </source>
</evidence>
<evidence type="ECO:0000269" key="8">
    <source>
    </source>
</evidence>
<evidence type="ECO:0000269" key="9">
    <source>
    </source>
</evidence>
<evidence type="ECO:0000269" key="10">
    <source>
    </source>
</evidence>
<evidence type="ECO:0000269" key="11">
    <source>
    </source>
</evidence>
<evidence type="ECO:0000269" key="12">
    <source>
    </source>
</evidence>
<evidence type="ECO:0000269" key="13">
    <source>
    </source>
</evidence>
<evidence type="ECO:0007829" key="14">
    <source>
        <dbReference type="PDB" id="4EUK"/>
    </source>
</evidence>
<name>AHP1_ARATH</name>
<comment type="function">
    <text evidence="3 7 8 13">Functions as a two-component phosphorelay mediators between cytokinin sensor histidine kinases and response regulator (B-type ARRs). Plays an important role in propagating cytokinin signal transduction through the multistep His-to-Asp phosphorelay.</text>
</comment>
<comment type="subunit">
    <text evidence="4 5 6 8 9 11 12">Interacts with the B-type response regulators ARR1, ARR2, ARR4 and ARR9. Binds to ETR1, AHK2, AHK3, AHK4, AHK5 and FBR12.</text>
</comment>
<comment type="interaction">
    <interactant intactId="EBI-1100673">
        <id>Q9ZNV9</id>
    </interactant>
    <interactant intactId="EBI-1100634">
        <id>Q9C5U2</id>
        <label>AHK2</label>
    </interactant>
    <organismsDiffer>false</organismsDiffer>
    <experiments>2</experiments>
</comment>
<comment type="interaction">
    <interactant intactId="EBI-1100673">
        <id>Q9ZNV9</id>
    </interactant>
    <interactant intactId="EBI-1100653">
        <id>Q9C5U1</id>
        <label>AHK3</label>
    </interactant>
    <organismsDiffer>false</organismsDiffer>
    <experiments>2</experiments>
</comment>
<comment type="interaction">
    <interactant intactId="EBI-1100673">
        <id>Q9ZNV9</id>
    </interactant>
    <interactant intactId="EBI-1100998">
        <id>Q940D0</id>
        <label>ARR1</label>
    </interactant>
    <organismsDiffer>false</organismsDiffer>
    <experiments>3</experiments>
</comment>
<comment type="interaction">
    <interactant intactId="EBI-1100673">
        <id>Q9ZNV9</id>
    </interactant>
    <interactant intactId="EBI-1100737">
        <id>Q8L9Y3</id>
        <label>ARR14</label>
    </interactant>
    <organismsDiffer>false</organismsDiffer>
    <experiments>2</experiments>
</comment>
<comment type="interaction">
    <interactant intactId="EBI-1100673">
        <id>Q9ZNV9</id>
    </interactant>
    <interactant intactId="EBI-1101028">
        <id>Q9ZWJ9</id>
        <label>ARR2</label>
    </interactant>
    <organismsDiffer>false</organismsDiffer>
    <experiments>4</experiments>
</comment>
<comment type="interaction">
    <interactant intactId="EBI-1100673">
        <id>Q9ZNV9</id>
    </interactant>
    <interactant intactId="EBI-1100883">
        <id>Q9SB04</id>
        <label>ARR5</label>
    </interactant>
    <organismsDiffer>false</organismsDiffer>
    <experiments>2</experiments>
</comment>
<comment type="interaction">
    <interactant intactId="EBI-1100673">
        <id>Q9ZNV9</id>
    </interactant>
    <interactant intactId="EBI-1100950">
        <id>O80366</id>
        <label>ARR9</label>
    </interactant>
    <organismsDiffer>false</organismsDiffer>
    <experiments>3</experiments>
</comment>
<comment type="interaction">
    <interactant intactId="EBI-1100673">
        <id>Q9ZNV9</id>
    </interactant>
    <interactant intactId="EBI-1606682">
        <id>P49333</id>
        <label>ETR1</label>
    </interactant>
    <organismsDiffer>false</organismsDiffer>
    <experiments>3</experiments>
</comment>
<comment type="subcellular location">
    <subcellularLocation>
        <location evidence="10">Cytoplasm</location>
        <location evidence="10">Cytosol</location>
    </subcellularLocation>
    <subcellularLocation>
        <location evidence="10">Nucleus</location>
    </subcellularLocation>
</comment>
<comment type="tissue specificity">
    <text evidence="8 13">Strongly expressed in roots.</text>
</comment>
<comment type="induction">
    <text evidence="13">By salt, cold and drought stress.</text>
</comment>
<comment type="domain">
    <text>Histidine-containing phosphotransfer domain (HPt) contains an active histidine that mediates the phosphotransfer.</text>
</comment>
<comment type="PTM">
    <text>Two-component system major event consists of a His-to-Asp phosphorelay between a sensor histidine kinase (HK) and a response regulator (RR). In plants, the His-to-Asp phosphorelay involves an additional intermediate named Histidine-containing phosphotransfer protein (HPt). This multistep phosphorelay consists of a His-Asp-His-Asp sequential transfer of a phosphate group between first a His and an Asp of the HK protein, followed by the transfer to a conserved His of the HPt protein and finally the transfer to an Asp in the receiver domain of the RR protein.</text>
</comment>
<keyword id="KW-0002">3D-structure</keyword>
<keyword id="KW-0007">Acetylation</keyword>
<keyword id="KW-0932">Cytokinin signaling pathway</keyword>
<keyword id="KW-0963">Cytoplasm</keyword>
<keyword id="KW-0539">Nucleus</keyword>
<keyword id="KW-0597">Phosphoprotein</keyword>
<keyword id="KW-1185">Reference proteome</keyword>
<keyword id="KW-0346">Stress response</keyword>
<keyword id="KW-0902">Two-component regulatory system</keyword>
<protein>
    <recommendedName>
        <fullName>Histidine-containing phosphotransfer protein 1</fullName>
    </recommendedName>
</protein>
<organism>
    <name type="scientific">Arabidopsis thaliana</name>
    <name type="common">Mouse-ear cress</name>
    <dbReference type="NCBI Taxonomy" id="3702"/>
    <lineage>
        <taxon>Eukaryota</taxon>
        <taxon>Viridiplantae</taxon>
        <taxon>Streptophyta</taxon>
        <taxon>Embryophyta</taxon>
        <taxon>Tracheophyta</taxon>
        <taxon>Spermatophyta</taxon>
        <taxon>Magnoliopsida</taxon>
        <taxon>eudicotyledons</taxon>
        <taxon>Gunneridae</taxon>
        <taxon>Pentapetalae</taxon>
        <taxon>rosids</taxon>
        <taxon>malvids</taxon>
        <taxon>Brassicales</taxon>
        <taxon>Brassicaceae</taxon>
        <taxon>Camelineae</taxon>
        <taxon>Arabidopsis</taxon>
    </lineage>
</organism>
<sequence>MDLVQKQKSLQDYTKSLFLEGILDSQFLQLQQLQDESNPDFVSQVVTLFFQDSDRILNDLSLSLDQQVVDFKKVDPHVHQLKGSSSSIGAQRVKNACVVFRSFCEQQNVEACHRCLQQVKQEYYLVKNRLETLFKLEQQIVASGGMIPAVELGF</sequence>
<dbReference type="EMBL" id="AB012570">
    <property type="protein sequence ID" value="BAA37112.1"/>
    <property type="molecule type" value="mRNA"/>
</dbReference>
<dbReference type="EMBL" id="AB015141">
    <property type="protein sequence ID" value="BAA36335.1"/>
    <property type="molecule type" value="mRNA"/>
</dbReference>
<dbReference type="EMBL" id="AB019232">
    <property type="protein sequence ID" value="BAB02346.1"/>
    <property type="molecule type" value="Genomic_DNA"/>
</dbReference>
<dbReference type="EMBL" id="CP002686">
    <property type="protein sequence ID" value="AEE76518.1"/>
    <property type="molecule type" value="Genomic_DNA"/>
</dbReference>
<dbReference type="EMBL" id="AF370265">
    <property type="protein sequence ID" value="AAK44080.1"/>
    <property type="molecule type" value="mRNA"/>
</dbReference>
<dbReference type="EMBL" id="AY063082">
    <property type="protein sequence ID" value="AAL34256.1"/>
    <property type="molecule type" value="mRNA"/>
</dbReference>
<dbReference type="RefSeq" id="NP_188788.1">
    <property type="nucleotide sequence ID" value="NM_113046.4"/>
</dbReference>
<dbReference type="PDB" id="4EUK">
    <property type="method" value="X-ray"/>
    <property type="resolution" value="1.95 A"/>
    <property type="chains" value="B=1-154"/>
</dbReference>
<dbReference type="PDBsum" id="4EUK"/>
<dbReference type="SMR" id="Q9ZNV9"/>
<dbReference type="BioGRID" id="7037">
    <property type="interactions" value="33"/>
</dbReference>
<dbReference type="FunCoup" id="Q9ZNV9">
    <property type="interactions" value="293"/>
</dbReference>
<dbReference type="IntAct" id="Q9ZNV9">
    <property type="interactions" value="25"/>
</dbReference>
<dbReference type="STRING" id="3702.Q9ZNV9"/>
<dbReference type="PaxDb" id="3702-AT3G21510.1"/>
<dbReference type="ProteomicsDB" id="244803"/>
<dbReference type="DNASU" id="821705"/>
<dbReference type="EnsemblPlants" id="AT3G21510.1">
    <property type="protein sequence ID" value="AT3G21510.1"/>
    <property type="gene ID" value="AT3G21510"/>
</dbReference>
<dbReference type="GeneID" id="821705"/>
<dbReference type="Gramene" id="AT3G21510.1">
    <property type="protein sequence ID" value="AT3G21510.1"/>
    <property type="gene ID" value="AT3G21510"/>
</dbReference>
<dbReference type="KEGG" id="ath:AT3G21510"/>
<dbReference type="Araport" id="AT3G21510"/>
<dbReference type="TAIR" id="AT3G21510">
    <property type="gene designation" value="AHP1"/>
</dbReference>
<dbReference type="eggNOG" id="KOG4747">
    <property type="taxonomic scope" value="Eukaryota"/>
</dbReference>
<dbReference type="HOGENOM" id="CLU_111777_1_0_1"/>
<dbReference type="InParanoid" id="Q9ZNV9"/>
<dbReference type="OMA" id="QNTDACL"/>
<dbReference type="OrthoDB" id="1673781at2759"/>
<dbReference type="PhylomeDB" id="Q9ZNV9"/>
<dbReference type="EvolutionaryTrace" id="Q9ZNV9"/>
<dbReference type="PRO" id="PR:Q9ZNV9"/>
<dbReference type="Proteomes" id="UP000006548">
    <property type="component" value="Chromosome 3"/>
</dbReference>
<dbReference type="ExpressionAtlas" id="Q9ZNV9">
    <property type="expression patterns" value="baseline and differential"/>
</dbReference>
<dbReference type="GO" id="GO:0005737">
    <property type="term" value="C:cytoplasm"/>
    <property type="evidence" value="ECO:0000314"/>
    <property type="project" value="UniProtKB"/>
</dbReference>
<dbReference type="GO" id="GO:0005829">
    <property type="term" value="C:cytosol"/>
    <property type="evidence" value="ECO:0007669"/>
    <property type="project" value="UniProtKB-SubCell"/>
</dbReference>
<dbReference type="GO" id="GO:0005634">
    <property type="term" value="C:nucleus"/>
    <property type="evidence" value="ECO:0000314"/>
    <property type="project" value="UniProtKB"/>
</dbReference>
<dbReference type="GO" id="GO:0009927">
    <property type="term" value="F:histidine phosphotransfer kinase activity"/>
    <property type="evidence" value="ECO:0000314"/>
    <property type="project" value="TAIR"/>
</dbReference>
<dbReference type="GO" id="GO:0043424">
    <property type="term" value="F:protein histidine kinase binding"/>
    <property type="evidence" value="ECO:0000353"/>
    <property type="project" value="UniProtKB"/>
</dbReference>
<dbReference type="GO" id="GO:0009736">
    <property type="term" value="P:cytokinin-activated signaling pathway"/>
    <property type="evidence" value="ECO:0000315"/>
    <property type="project" value="TAIR"/>
</dbReference>
<dbReference type="GO" id="GO:0009553">
    <property type="term" value="P:embryo sac development"/>
    <property type="evidence" value="ECO:0000316"/>
    <property type="project" value="TAIR"/>
</dbReference>
<dbReference type="GO" id="GO:0009825">
    <property type="term" value="P:multidimensional cell growth"/>
    <property type="evidence" value="ECO:0000316"/>
    <property type="project" value="TAIR"/>
</dbReference>
<dbReference type="GO" id="GO:0000160">
    <property type="term" value="P:phosphorelay signal transduction system"/>
    <property type="evidence" value="ECO:0000315"/>
    <property type="project" value="TAIR"/>
</dbReference>
<dbReference type="CDD" id="cd00088">
    <property type="entry name" value="HPT"/>
    <property type="match status" value="1"/>
</dbReference>
<dbReference type="FunFam" id="1.20.120.160:FF:000001">
    <property type="entry name" value="Histidine-containing phosphotransfer protein 1"/>
    <property type="match status" value="1"/>
</dbReference>
<dbReference type="Gene3D" id="1.20.120.160">
    <property type="entry name" value="HPT domain"/>
    <property type="match status" value="1"/>
</dbReference>
<dbReference type="InterPro" id="IPR045871">
    <property type="entry name" value="AHP1-5/YPD1"/>
</dbReference>
<dbReference type="InterPro" id="IPR036641">
    <property type="entry name" value="HPT_dom_sf"/>
</dbReference>
<dbReference type="InterPro" id="IPR008207">
    <property type="entry name" value="Sig_transdc_His_kin_Hpt_dom"/>
</dbReference>
<dbReference type="PANTHER" id="PTHR28242:SF5">
    <property type="entry name" value="HISTIDINE-CONTAINING PHOSPHOTRANSFER PROTEIN 1"/>
    <property type="match status" value="1"/>
</dbReference>
<dbReference type="PANTHER" id="PTHR28242">
    <property type="entry name" value="PHOSPHORELAY INTERMEDIATE PROTEIN YPD1"/>
    <property type="match status" value="1"/>
</dbReference>
<dbReference type="Pfam" id="PF01627">
    <property type="entry name" value="Hpt"/>
    <property type="match status" value="1"/>
</dbReference>
<dbReference type="SUPFAM" id="SSF47226">
    <property type="entry name" value="Histidine-containing phosphotransfer domain, HPT domain"/>
    <property type="match status" value="1"/>
</dbReference>
<dbReference type="PROSITE" id="PS50894">
    <property type="entry name" value="HPT"/>
    <property type="match status" value="1"/>
</dbReference>
<feature type="chain" id="PRO_0000074927" description="Histidine-containing phosphotransfer protein 1">
    <location>
        <begin position="1"/>
        <end position="154"/>
    </location>
</feature>
<feature type="domain" description="HPt" evidence="2">
    <location>
        <begin position="38"/>
        <end position="143"/>
    </location>
</feature>
<feature type="modified residue" description="N-acetylmethionine" evidence="1">
    <location>
        <position position="1"/>
    </location>
</feature>
<feature type="modified residue" description="Phosphohistidine" evidence="2">
    <location>
        <position position="79"/>
    </location>
</feature>
<feature type="helix" evidence="14">
    <location>
        <begin position="3"/>
        <end position="19"/>
    </location>
</feature>
<feature type="helix" evidence="14">
    <location>
        <begin position="25"/>
        <end position="33"/>
    </location>
</feature>
<feature type="helix" evidence="14">
    <location>
        <begin position="41"/>
        <end position="65"/>
    </location>
</feature>
<feature type="strand" evidence="14">
    <location>
        <begin position="66"/>
        <end position="68"/>
    </location>
</feature>
<feature type="helix" evidence="14">
    <location>
        <begin position="71"/>
        <end position="88"/>
    </location>
</feature>
<feature type="helix" evidence="14">
    <location>
        <begin position="91"/>
        <end position="105"/>
    </location>
</feature>
<feature type="helix" evidence="14">
    <location>
        <begin position="109"/>
        <end position="142"/>
    </location>
</feature>
<reference key="1">
    <citation type="journal article" date="1998" name="FEBS Lett.">
        <title>Characterization of genes for two-component phosphorelay mediators with a single HPt domain in Arabidopsis thaliana.</title>
        <authorList>
            <person name="Miyata S."/>
            <person name="Urao T."/>
            <person name="Yamaguchi-Shinozaki K."/>
            <person name="Shinozaki K."/>
        </authorList>
    </citation>
    <scope>NUCLEOTIDE SEQUENCE [MRNA]</scope>
    <scope>FUNCTION</scope>
    <scope>INDUCTION</scope>
    <scope>TISSUE SPECIFICITY</scope>
    <source>
        <strain>cv. Columbia</strain>
    </source>
</reference>
<reference key="2">
    <citation type="journal article" date="1998" name="Plant Cell Physiol.">
        <title>Histidine-containing phosphotransfer (HPt) signal transducers implicated in His-to-Asp phosphorelay in Arabidopsis.</title>
        <authorList>
            <person name="Suzuki T."/>
            <person name="Imamura A."/>
            <person name="Ueguchi C."/>
            <person name="Mizuno T."/>
        </authorList>
    </citation>
    <scope>NUCLEOTIDE SEQUENCE [MRNA]</scope>
    <scope>FUNCTION</scope>
    <source>
        <strain>cv. Columbia</strain>
    </source>
</reference>
<reference key="3">
    <citation type="journal article" date="2000" name="DNA Res.">
        <title>Structural analysis of Arabidopsis thaliana chromosome 3. I. Sequence features of the regions of 4,504,864 bp covered by sixty P1 and TAC clones.</title>
        <authorList>
            <person name="Sato S."/>
            <person name="Nakamura Y."/>
            <person name="Kaneko T."/>
            <person name="Katoh T."/>
            <person name="Asamizu E."/>
            <person name="Tabata S."/>
        </authorList>
    </citation>
    <scope>NUCLEOTIDE SEQUENCE [LARGE SCALE GENOMIC DNA]</scope>
    <source>
        <strain>cv. Columbia</strain>
    </source>
</reference>
<reference key="4">
    <citation type="journal article" date="2017" name="Plant J.">
        <title>Araport11: a complete reannotation of the Arabidopsis thaliana reference genome.</title>
        <authorList>
            <person name="Cheng C.Y."/>
            <person name="Krishnakumar V."/>
            <person name="Chan A.P."/>
            <person name="Thibaud-Nissen F."/>
            <person name="Schobel S."/>
            <person name="Town C.D."/>
        </authorList>
    </citation>
    <scope>GENOME REANNOTATION</scope>
    <source>
        <strain>cv. Columbia</strain>
    </source>
</reference>
<reference key="5">
    <citation type="journal article" date="2003" name="Science">
        <title>Empirical analysis of transcriptional activity in the Arabidopsis genome.</title>
        <authorList>
            <person name="Yamada K."/>
            <person name="Lim J."/>
            <person name="Dale J.M."/>
            <person name="Chen H."/>
            <person name="Shinn P."/>
            <person name="Palm C.J."/>
            <person name="Southwick A.M."/>
            <person name="Wu H.C."/>
            <person name="Kim C.J."/>
            <person name="Nguyen M."/>
            <person name="Pham P.K."/>
            <person name="Cheuk R.F."/>
            <person name="Karlin-Newmann G."/>
            <person name="Liu S.X."/>
            <person name="Lam B."/>
            <person name="Sakano H."/>
            <person name="Wu T."/>
            <person name="Yu G."/>
            <person name="Miranda M."/>
            <person name="Quach H.L."/>
            <person name="Tripp M."/>
            <person name="Chang C.H."/>
            <person name="Lee J.M."/>
            <person name="Toriumi M.J."/>
            <person name="Chan M.M."/>
            <person name="Tang C.C."/>
            <person name="Onodera C.S."/>
            <person name="Deng J.M."/>
            <person name="Akiyama K."/>
            <person name="Ansari Y."/>
            <person name="Arakawa T."/>
            <person name="Banh J."/>
            <person name="Banno F."/>
            <person name="Bowser L."/>
            <person name="Brooks S.Y."/>
            <person name="Carninci P."/>
            <person name="Chao Q."/>
            <person name="Choy N."/>
            <person name="Enju A."/>
            <person name="Goldsmith A.D."/>
            <person name="Gurjal M."/>
            <person name="Hansen N.F."/>
            <person name="Hayashizaki Y."/>
            <person name="Johnson-Hopson C."/>
            <person name="Hsuan V.W."/>
            <person name="Iida K."/>
            <person name="Karnes M."/>
            <person name="Khan S."/>
            <person name="Koesema E."/>
            <person name="Ishida J."/>
            <person name="Jiang P.X."/>
            <person name="Jones T."/>
            <person name="Kawai J."/>
            <person name="Kamiya A."/>
            <person name="Meyers C."/>
            <person name="Nakajima M."/>
            <person name="Narusaka M."/>
            <person name="Seki M."/>
            <person name="Sakurai T."/>
            <person name="Satou M."/>
            <person name="Tamse R."/>
            <person name="Vaysberg M."/>
            <person name="Wallender E.K."/>
            <person name="Wong C."/>
            <person name="Yamamura Y."/>
            <person name="Yuan S."/>
            <person name="Shinozaki K."/>
            <person name="Davis R.W."/>
            <person name="Theologis A."/>
            <person name="Ecker J.R."/>
        </authorList>
    </citation>
    <scope>NUCLEOTIDE SEQUENCE [LARGE SCALE MRNA]</scope>
    <source>
        <strain>cv. Columbia</strain>
    </source>
</reference>
<reference key="6">
    <citation type="journal article" date="2000" name="FEBS Lett.">
        <title>Possible His to Asp phosphorelay signaling in an Arabidopsis two-component system.</title>
        <authorList>
            <person name="Urao T."/>
            <person name="Miyata S."/>
            <person name="Yamaguchi-Shinozaki K."/>
            <person name="Shinozaki K."/>
        </authorList>
    </citation>
    <scope>INTERACTION WITH ARR4; ARR9 AND ETR1</scope>
</reference>
<reference key="7">
    <citation type="journal article" date="2001" name="Plant Cell Physiol.">
        <title>Two types of putative nuclear factors that physically interact with histidine-containing phosphotransfer (Hpt) domains, signaling mediators in His-to-Asp phosphorelay, in Arabidopsis thaliana.</title>
        <authorList>
            <person name="Suzuki T."/>
            <person name="Sakurai K."/>
            <person name="Ueguchi C."/>
            <person name="Mizuno T."/>
        </authorList>
    </citation>
    <scope>INTERACTION</scope>
</reference>
<reference key="8">
    <citation type="journal article" date="2001" name="Plant Cell Physiol.">
        <title>The Arabidopsis sensor His-kinase, AHk4, can respond to cytokinins.</title>
        <authorList>
            <person name="Suzuki T."/>
            <person name="Miwa K."/>
            <person name="Ishikawa K."/>
            <person name="Yamada H."/>
            <person name="Aiba H."/>
            <person name="Mizuno T."/>
        </authorList>
    </citation>
    <scope>INTERACTION WITH AHK4</scope>
</reference>
<reference key="9">
    <citation type="journal article" date="2002" name="Plant Physiol.">
        <title>Two-component signal transduction pathways in Arabidopsis.</title>
        <authorList>
            <person name="Hwang I."/>
            <person name="Chen H.-C."/>
            <person name="Sheen J."/>
        </authorList>
    </citation>
    <scope>GENE FAMILY</scope>
    <scope>NOMENCLATURE</scope>
    <scope>FUNCTION</scope>
</reference>
<reference key="10">
    <citation type="journal article" date="2004" name="Biosci. Biotechnol. Biochem.">
        <title>Comparative studies of the AHP histidine-containing phosphotransmitters implicated in His-to-Asp phosphorelay in Arabidopsis thaliana.</title>
        <authorList>
            <person name="Tanaka Y."/>
            <person name="Suzuki T."/>
            <person name="Yamashino T."/>
            <person name="Mizuno T."/>
        </authorList>
    </citation>
    <scope>FUNCTION</scope>
    <scope>TISSUE SPECIFICITY</scope>
    <scope>INTERACTION</scope>
</reference>
<reference key="11">
    <citation type="journal article" date="2006" name="FEBS J.">
        <title>Analysis of protein interactions within the cytokinin-signaling pathway of Arabidopsis thaliana.</title>
        <authorList>
            <person name="Dortay H."/>
            <person name="Mehnert N."/>
            <person name="Buerkle L."/>
            <person name="Schmuelling T."/>
            <person name="Heyl A."/>
        </authorList>
    </citation>
    <scope>INTERACTION WITH AHK2; AHK3 AND AHK4</scope>
</reference>
<reference key="12">
    <citation type="journal article" date="2008" name="J. Proteome Res.">
        <title>Toward an interaction map of the two-component signaling pathway of Arabidopsis thaliana.</title>
        <authorList>
            <person name="Dortay H."/>
            <person name="Gruhn N."/>
            <person name="Pfeifer A."/>
            <person name="Schwerdtner M."/>
            <person name="Schmuelling T."/>
            <person name="Heyl A."/>
        </authorList>
    </citation>
    <scope>SUBCELLULAR LOCATION</scope>
</reference>
<reference key="13">
    <citation type="journal article" date="2013" name="Plant Cell">
        <title>The Arabidopsis eukaryotic translation initiation factor eIF5A-2 regulates root protoxylem development by modulating cytokinin signaling.</title>
        <authorList>
            <person name="Ren B."/>
            <person name="Chen Q."/>
            <person name="Hong S."/>
            <person name="Zhao W."/>
            <person name="Feng J."/>
            <person name="Feng H."/>
            <person name="Zuo J."/>
        </authorList>
    </citation>
    <scope>INTERACTION WITH FBR12 AND AHK4</scope>
</reference>
<reference key="14">
    <citation type="journal article" date="2013" name="Mol. Plant">
        <title>Structure-function analysis of Arabidopsis thaliana histidine kinase AHK5 bound to its cognate phosphotransfer protein AHP1.</title>
        <authorList>
            <person name="Bauer J."/>
            <person name="Reiss K."/>
            <person name="Veerabagu M."/>
            <person name="Heunemann M."/>
            <person name="Harter K."/>
            <person name="Stehle T."/>
        </authorList>
    </citation>
    <scope>X-RAY CRYSTALLOGRAPHY (1.95 ANGSTROMS) IN COMPLEX WITH AHK5</scope>
    <scope>INTERACTION WITH AHK5</scope>
</reference>
<accession>Q9ZNV9</accession>
<proteinExistence type="evidence at protein level"/>